<organism>
    <name type="scientific">Porphyromonas gingivalis (strain ATCC BAA-308 / W83)</name>
    <dbReference type="NCBI Taxonomy" id="242619"/>
    <lineage>
        <taxon>Bacteria</taxon>
        <taxon>Pseudomonadati</taxon>
        <taxon>Bacteroidota</taxon>
        <taxon>Bacteroidia</taxon>
        <taxon>Bacteroidales</taxon>
        <taxon>Porphyromonadaceae</taxon>
        <taxon>Porphyromonas</taxon>
    </lineage>
</organism>
<dbReference type="EC" id="3.2.1.-"/>
<dbReference type="EMBL" id="AE015924">
    <property type="protein sequence ID" value="AAQ65842.1"/>
    <property type="molecule type" value="Genomic_DNA"/>
</dbReference>
<dbReference type="RefSeq" id="WP_080502134.1">
    <property type="nucleotide sequence ID" value="NC_002950.2"/>
</dbReference>
<dbReference type="SMR" id="Q7MWF4"/>
<dbReference type="STRING" id="242619.PG_0664"/>
<dbReference type="CAZy" id="GH109">
    <property type="family name" value="Glycoside Hydrolase Family 109"/>
</dbReference>
<dbReference type="DNASU" id="2552598"/>
<dbReference type="EnsemblBacteria" id="AAQ65842">
    <property type="protein sequence ID" value="AAQ65842"/>
    <property type="gene ID" value="PG_0664"/>
</dbReference>
<dbReference type="KEGG" id="pgi:PG_0664"/>
<dbReference type="eggNOG" id="COG0673">
    <property type="taxonomic scope" value="Bacteria"/>
</dbReference>
<dbReference type="HOGENOM" id="CLU_046965_0_0_10"/>
<dbReference type="Proteomes" id="UP000000588">
    <property type="component" value="Chromosome"/>
</dbReference>
<dbReference type="GO" id="GO:0016798">
    <property type="term" value="F:hydrolase activity, acting on glycosyl bonds"/>
    <property type="evidence" value="ECO:0007669"/>
    <property type="project" value="UniProtKB-KW"/>
</dbReference>
<dbReference type="GO" id="GO:0000166">
    <property type="term" value="F:nucleotide binding"/>
    <property type="evidence" value="ECO:0007669"/>
    <property type="project" value="InterPro"/>
</dbReference>
<dbReference type="Gene3D" id="3.30.360.10">
    <property type="entry name" value="Dihydrodipicolinate Reductase, domain 2"/>
    <property type="match status" value="1"/>
</dbReference>
<dbReference type="Gene3D" id="3.40.50.720">
    <property type="entry name" value="NAD(P)-binding Rossmann-like Domain"/>
    <property type="match status" value="1"/>
</dbReference>
<dbReference type="InterPro" id="IPR000683">
    <property type="entry name" value="Gfo/Idh/MocA-like_OxRdtase_N"/>
</dbReference>
<dbReference type="InterPro" id="IPR050463">
    <property type="entry name" value="Gfo/Idh/MocA_oxidrdct_glycsds"/>
</dbReference>
<dbReference type="InterPro" id="IPR049303">
    <property type="entry name" value="Glyco_hydro_109_C"/>
</dbReference>
<dbReference type="InterPro" id="IPR036291">
    <property type="entry name" value="NAD(P)-bd_dom_sf"/>
</dbReference>
<dbReference type="PANTHER" id="PTHR43818">
    <property type="entry name" value="BCDNA.GH03377"/>
    <property type="match status" value="1"/>
</dbReference>
<dbReference type="PANTHER" id="PTHR43818:SF1">
    <property type="entry name" value="GLYCOSYL HYDROLASE FAMILY 109 PROTEIN"/>
    <property type="match status" value="1"/>
</dbReference>
<dbReference type="Pfam" id="PF01408">
    <property type="entry name" value="GFO_IDH_MocA"/>
    <property type="match status" value="1"/>
</dbReference>
<dbReference type="Pfam" id="PF21252">
    <property type="entry name" value="Glyco_hydro_109_C"/>
    <property type="match status" value="1"/>
</dbReference>
<dbReference type="SUPFAM" id="SSF55347">
    <property type="entry name" value="Glyceraldehyde-3-phosphate dehydrogenase-like, C-terminal domain"/>
    <property type="match status" value="1"/>
</dbReference>
<dbReference type="SUPFAM" id="SSF51735">
    <property type="entry name" value="NAD(P)-binding Rossmann-fold domains"/>
    <property type="match status" value="1"/>
</dbReference>
<gene>
    <name type="ordered locus">PG_0664</name>
</gene>
<proteinExistence type="inferred from homology"/>
<feature type="signal peptide" evidence="2">
    <location>
        <begin position="1"/>
        <end position="19"/>
    </location>
</feature>
<feature type="chain" id="PRO_0000348559" description="Glycosyl hydrolase family 109 protein">
    <location>
        <begin position="20"/>
        <end position="468"/>
    </location>
</feature>
<feature type="binding site" evidence="1">
    <location>
        <begin position="67"/>
        <end position="68"/>
    </location>
    <ligand>
        <name>NAD(+)</name>
        <dbReference type="ChEBI" id="CHEBI:57540"/>
    </ligand>
</feature>
<feature type="binding site" evidence="1">
    <location>
        <position position="89"/>
    </location>
    <ligand>
        <name>NAD(+)</name>
        <dbReference type="ChEBI" id="CHEBI:57540"/>
    </ligand>
</feature>
<feature type="binding site" evidence="1">
    <location>
        <begin position="138"/>
        <end position="141"/>
    </location>
    <ligand>
        <name>NAD(+)</name>
        <dbReference type="ChEBI" id="CHEBI:57540"/>
    </ligand>
</feature>
<feature type="binding site" evidence="1">
    <location>
        <begin position="158"/>
        <end position="159"/>
    </location>
    <ligand>
        <name>NAD(+)</name>
        <dbReference type="ChEBI" id="CHEBI:57540"/>
    </ligand>
</feature>
<feature type="binding site" evidence="1">
    <location>
        <position position="187"/>
    </location>
    <ligand>
        <name>NAD(+)</name>
        <dbReference type="ChEBI" id="CHEBI:57540"/>
    </ligand>
</feature>
<feature type="binding site" evidence="1">
    <location>
        <position position="216"/>
    </location>
    <ligand>
        <name>substrate</name>
    </ligand>
</feature>
<feature type="binding site" evidence="1">
    <location>
        <position position="232"/>
    </location>
    <ligand>
        <name>substrate</name>
    </ligand>
</feature>
<feature type="binding site" evidence="1">
    <location>
        <begin position="244"/>
        <end position="247"/>
    </location>
    <ligand>
        <name>substrate</name>
    </ligand>
</feature>
<feature type="binding site" evidence="1">
    <location>
        <position position="244"/>
    </location>
    <ligand>
        <name>NAD(+)</name>
        <dbReference type="ChEBI" id="CHEBI:57540"/>
    </ligand>
</feature>
<feature type="binding site" evidence="1">
    <location>
        <position position="322"/>
    </location>
    <ligand>
        <name>substrate</name>
    </ligand>
</feature>
<protein>
    <recommendedName>
        <fullName>Glycosyl hydrolase family 109 protein</fullName>
        <ecNumber>3.2.1.-</ecNumber>
    </recommendedName>
</protein>
<name>GH109_PORGI</name>
<keyword id="KW-0326">Glycosidase</keyword>
<keyword id="KW-0378">Hydrolase</keyword>
<keyword id="KW-0520">NAD</keyword>
<keyword id="KW-1185">Reference proteome</keyword>
<keyword id="KW-0732">Signal</keyword>
<comment type="function">
    <text evidence="1">Glycosidase.</text>
</comment>
<comment type="cofactor">
    <cofactor evidence="1">
        <name>NAD(+)</name>
        <dbReference type="ChEBI" id="CHEBI:57540"/>
    </cofactor>
    <text evidence="1">Binds 1 NAD(+) per subunit. The NAD(+) cannot dissociate.</text>
</comment>
<comment type="similarity">
    <text evidence="3">Belongs to the Gfo/Idh/MocA family. Glycosyl hydrolase 109 subfamily.</text>
</comment>
<reference key="1">
    <citation type="journal article" date="2003" name="J. Bacteriol.">
        <title>Complete genome sequence of the oral pathogenic bacterium Porphyromonas gingivalis strain W83.</title>
        <authorList>
            <person name="Nelson K.E."/>
            <person name="Fleischmann R.D."/>
            <person name="DeBoy R.T."/>
            <person name="Paulsen I.T."/>
            <person name="Fouts D.E."/>
            <person name="Eisen J.A."/>
            <person name="Daugherty S.C."/>
            <person name="Dodson R.J."/>
            <person name="Durkin A.S."/>
            <person name="Gwinn M.L."/>
            <person name="Haft D.H."/>
            <person name="Kolonay J.F."/>
            <person name="Nelson W.C."/>
            <person name="Mason T.M."/>
            <person name="Tallon L."/>
            <person name="Gray J."/>
            <person name="Granger D."/>
            <person name="Tettelin H."/>
            <person name="Dong H."/>
            <person name="Galvin J.L."/>
            <person name="Duncan M.J."/>
            <person name="Dewhirst F.E."/>
            <person name="Fraser C.M."/>
        </authorList>
    </citation>
    <scope>NUCLEOTIDE SEQUENCE [LARGE SCALE GENOMIC DNA]</scope>
    <source>
        <strain>ATCC BAA-308 / W83</strain>
    </source>
</reference>
<sequence>MVYKVFLSLCIGLALSASAALHAQKAVSGHAPIQVETPARSSGQKHVLQLVTPKLETVRIGIIGLGMRGPGAVERFSKIPGTQIVALCDVLPERVKKTQEILVKAGLPEAAAYSGSEDAWKKLCEREDIDLVYIVTDWKTHAEMGVYAMEHGKHAAIEVPAAMTLEEIWKLIDTSERTRKHCIQLENCVYDFFELTTLNMAHQGVFGEILHAEGAYIHNLEDFWPYYWNNWRLDYNRKHRGDVYATHGMGPACQLLDIHRGDRMKTIVAMDTKAVNGPAYIKNKTGEVVADFQNGDQTTSLIRTEKGKTLLIQHNVMTPRPYSRKYQAVGTDGFADKYPLEMYCLRPAQVDSDIAPDHEKLNAHGPVSEEVKKALMEKYKHPIHRELEETAKKVGGHGGMDYIMDYRLIYCLRNGLPLDMDVYDLAEWCCLAELSRISIENGSAPVAIPDFTRGNWDKVKGYRHAMAE</sequence>
<accession>Q7MWF4</accession>
<evidence type="ECO:0000250" key="1"/>
<evidence type="ECO:0000255" key="2"/>
<evidence type="ECO:0000305" key="3"/>